<organism>
    <name type="scientific">Homo sapiens</name>
    <name type="common">Human</name>
    <dbReference type="NCBI Taxonomy" id="9606"/>
    <lineage>
        <taxon>Eukaryota</taxon>
        <taxon>Metazoa</taxon>
        <taxon>Chordata</taxon>
        <taxon>Craniata</taxon>
        <taxon>Vertebrata</taxon>
        <taxon>Euteleostomi</taxon>
        <taxon>Mammalia</taxon>
        <taxon>Eutheria</taxon>
        <taxon>Euarchontoglires</taxon>
        <taxon>Primates</taxon>
        <taxon>Haplorrhini</taxon>
        <taxon>Catarrhini</taxon>
        <taxon>Hominidae</taxon>
        <taxon>Homo</taxon>
    </lineage>
</organism>
<comment type="function">
    <text>May play a role in the reorganization of neuronal actin structure.</text>
</comment>
<comment type="subunit">
    <text>Binds to F-actin and to vinculin.</text>
</comment>
<comment type="interaction">
    <interactant intactId="EBI-723376">
        <id>Q9UQ03</id>
    </interactant>
    <interactant intactId="EBI-743771">
        <id>Q92624</id>
        <label>APPBP2</label>
    </interactant>
    <organismsDiffer>false</organismsDiffer>
    <experiments>6</experiments>
</comment>
<comment type="subcellular location">
    <subcellularLocation>
        <location evidence="5">Cytoplasm</location>
        <location evidence="5">Cytoskeleton</location>
    </subcellularLocation>
</comment>
<comment type="alternative products">
    <event type="alternative splicing"/>
    <isoform>
        <id>Q9UQ03-1</id>
        <name>1</name>
        <sequence type="displayed"/>
    </isoform>
    <isoform>
        <id>Q9UQ03-2</id>
        <name>2</name>
        <sequence type="described" ref="VSP_037706"/>
    </isoform>
</comment>
<comment type="tissue specificity">
    <text>Expressed predominantly in brain.</text>
</comment>
<comment type="similarity">
    <text evidence="5">Belongs to the WD repeat coronin family.</text>
</comment>
<comment type="sequence caution" evidence="5">
    <conflict type="erroneous initiation">
        <sequence resource="EMBL-CDS" id="AAH26335"/>
    </conflict>
</comment>
<comment type="sequence caution" evidence="5">
    <conflict type="erroneous initiation">
        <sequence resource="EMBL-CDS" id="BAA36341"/>
    </conflict>
</comment>
<feature type="chain" id="PRO_0000050930" description="Coronin-2B">
    <location>
        <begin position="1"/>
        <end position="480"/>
    </location>
</feature>
<feature type="repeat" description="WD 1">
    <location>
        <begin position="29"/>
        <end position="77"/>
    </location>
</feature>
<feature type="repeat" description="WD 2">
    <location>
        <begin position="78"/>
        <end position="127"/>
    </location>
</feature>
<feature type="repeat" description="WD 3">
    <location>
        <begin position="128"/>
        <end position="170"/>
    </location>
</feature>
<feature type="repeat" description="WD 4">
    <location>
        <begin position="171"/>
        <end position="212"/>
    </location>
</feature>
<feature type="repeat" description="WD 5">
    <location>
        <begin position="213"/>
        <end position="259"/>
    </location>
</feature>
<feature type="repeat" description="WD 6">
    <location>
        <begin position="260"/>
        <end position="305"/>
    </location>
</feature>
<feature type="repeat" description="WD 7">
    <location>
        <begin position="306"/>
        <end position="345"/>
    </location>
</feature>
<feature type="coiled-coil region" evidence="1">
    <location>
        <begin position="436"/>
        <end position="479"/>
    </location>
</feature>
<feature type="splice variant" id="VSP_037706" description="In isoform 2." evidence="4">
    <original>MTVTKM</original>
    <variation>M</variation>
    <location>
        <begin position="1"/>
        <end position="6"/>
    </location>
</feature>
<feature type="sequence variant" id="VAR_058323" description="In dbSNP:rs17852400." evidence="2">
    <original>L</original>
    <variation>V</variation>
    <location>
        <position position="238"/>
    </location>
</feature>
<feature type="sequence variant" id="VAR_035878" description="In a colorectal cancer sample; somatic mutation; dbSNP:rs1314209013." evidence="3">
    <original>P</original>
    <variation>L</variation>
    <location>
        <position position="318"/>
    </location>
</feature>
<feature type="sequence conflict" description="In Ref. 1; BAA36341." evidence="5" ref="1">
    <original>E</original>
    <variation>A</variation>
    <location>
        <position position="128"/>
    </location>
</feature>
<protein>
    <recommendedName>
        <fullName>Coronin-2B</fullName>
    </recommendedName>
    <alternativeName>
        <fullName>Coronin-like protein C</fullName>
        <shortName>Clipin-C</shortName>
    </alternativeName>
    <alternativeName>
        <fullName>Protein FC96</fullName>
    </alternativeName>
</protein>
<reference key="1">
    <citation type="journal article" date="1999" name="J. Biol. Chem.">
        <title>A neurally enriched coronin-like protein, ClipinC, is a novel candidate for an actin cytoskeleton-cortical membrane-linking protein.</title>
        <authorList>
            <person name="Nakamura T."/>
            <person name="Takeuchi K."/>
            <person name="Muraoka S."/>
            <person name="Takezoe H."/>
            <person name="Takahashi N."/>
            <person name="Mori N."/>
        </authorList>
    </citation>
    <scope>NUCLEOTIDE SEQUENCE [MRNA] (ISOFORM 1)</scope>
    <source>
        <tissue>Brain</tissue>
    </source>
</reference>
<reference key="2">
    <citation type="journal article" date="2004" name="Nat. Genet.">
        <title>Complete sequencing and characterization of 21,243 full-length human cDNAs.</title>
        <authorList>
            <person name="Ota T."/>
            <person name="Suzuki Y."/>
            <person name="Nishikawa T."/>
            <person name="Otsuki T."/>
            <person name="Sugiyama T."/>
            <person name="Irie R."/>
            <person name="Wakamatsu A."/>
            <person name="Hayashi K."/>
            <person name="Sato H."/>
            <person name="Nagai K."/>
            <person name="Kimura K."/>
            <person name="Makita H."/>
            <person name="Sekine M."/>
            <person name="Obayashi M."/>
            <person name="Nishi T."/>
            <person name="Shibahara T."/>
            <person name="Tanaka T."/>
            <person name="Ishii S."/>
            <person name="Yamamoto J."/>
            <person name="Saito K."/>
            <person name="Kawai Y."/>
            <person name="Isono Y."/>
            <person name="Nakamura Y."/>
            <person name="Nagahari K."/>
            <person name="Murakami K."/>
            <person name="Yasuda T."/>
            <person name="Iwayanagi T."/>
            <person name="Wagatsuma M."/>
            <person name="Shiratori A."/>
            <person name="Sudo H."/>
            <person name="Hosoiri T."/>
            <person name="Kaku Y."/>
            <person name="Kodaira H."/>
            <person name="Kondo H."/>
            <person name="Sugawara M."/>
            <person name="Takahashi M."/>
            <person name="Kanda K."/>
            <person name="Yokoi T."/>
            <person name="Furuya T."/>
            <person name="Kikkawa E."/>
            <person name="Omura Y."/>
            <person name="Abe K."/>
            <person name="Kamihara K."/>
            <person name="Katsuta N."/>
            <person name="Sato K."/>
            <person name="Tanikawa M."/>
            <person name="Yamazaki M."/>
            <person name="Ninomiya K."/>
            <person name="Ishibashi T."/>
            <person name="Yamashita H."/>
            <person name="Murakawa K."/>
            <person name="Fujimori K."/>
            <person name="Tanai H."/>
            <person name="Kimata M."/>
            <person name="Watanabe M."/>
            <person name="Hiraoka S."/>
            <person name="Chiba Y."/>
            <person name="Ishida S."/>
            <person name="Ono Y."/>
            <person name="Takiguchi S."/>
            <person name="Watanabe S."/>
            <person name="Yosida M."/>
            <person name="Hotuta T."/>
            <person name="Kusano J."/>
            <person name="Kanehori K."/>
            <person name="Takahashi-Fujii A."/>
            <person name="Hara H."/>
            <person name="Tanase T.-O."/>
            <person name="Nomura Y."/>
            <person name="Togiya S."/>
            <person name="Komai F."/>
            <person name="Hara R."/>
            <person name="Takeuchi K."/>
            <person name="Arita M."/>
            <person name="Imose N."/>
            <person name="Musashino K."/>
            <person name="Yuuki H."/>
            <person name="Oshima A."/>
            <person name="Sasaki N."/>
            <person name="Aotsuka S."/>
            <person name="Yoshikawa Y."/>
            <person name="Matsunawa H."/>
            <person name="Ichihara T."/>
            <person name="Shiohata N."/>
            <person name="Sano S."/>
            <person name="Moriya S."/>
            <person name="Momiyama H."/>
            <person name="Satoh N."/>
            <person name="Takami S."/>
            <person name="Terashima Y."/>
            <person name="Suzuki O."/>
            <person name="Nakagawa S."/>
            <person name="Senoh A."/>
            <person name="Mizoguchi H."/>
            <person name="Goto Y."/>
            <person name="Shimizu F."/>
            <person name="Wakebe H."/>
            <person name="Hishigaki H."/>
            <person name="Watanabe T."/>
            <person name="Sugiyama A."/>
            <person name="Takemoto M."/>
            <person name="Kawakami B."/>
            <person name="Yamazaki M."/>
            <person name="Watanabe K."/>
            <person name="Kumagai A."/>
            <person name="Itakura S."/>
            <person name="Fukuzumi Y."/>
            <person name="Fujimori Y."/>
            <person name="Komiyama M."/>
            <person name="Tashiro H."/>
            <person name="Tanigami A."/>
            <person name="Fujiwara T."/>
            <person name="Ono T."/>
            <person name="Yamada K."/>
            <person name="Fujii Y."/>
            <person name="Ozaki K."/>
            <person name="Hirao M."/>
            <person name="Ohmori Y."/>
            <person name="Kawabata A."/>
            <person name="Hikiji T."/>
            <person name="Kobatake N."/>
            <person name="Inagaki H."/>
            <person name="Ikema Y."/>
            <person name="Okamoto S."/>
            <person name="Okitani R."/>
            <person name="Kawakami T."/>
            <person name="Noguchi S."/>
            <person name="Itoh T."/>
            <person name="Shigeta K."/>
            <person name="Senba T."/>
            <person name="Matsumura K."/>
            <person name="Nakajima Y."/>
            <person name="Mizuno T."/>
            <person name="Morinaga M."/>
            <person name="Sasaki M."/>
            <person name="Togashi T."/>
            <person name="Oyama M."/>
            <person name="Hata H."/>
            <person name="Watanabe M."/>
            <person name="Komatsu T."/>
            <person name="Mizushima-Sugano J."/>
            <person name="Satoh T."/>
            <person name="Shirai Y."/>
            <person name="Takahashi Y."/>
            <person name="Nakagawa K."/>
            <person name="Okumura K."/>
            <person name="Nagase T."/>
            <person name="Nomura N."/>
            <person name="Kikuchi H."/>
            <person name="Masuho Y."/>
            <person name="Yamashita R."/>
            <person name="Nakai K."/>
            <person name="Yada T."/>
            <person name="Nakamura Y."/>
            <person name="Ohara O."/>
            <person name="Isogai T."/>
            <person name="Sugano S."/>
        </authorList>
    </citation>
    <scope>NUCLEOTIDE SEQUENCE [LARGE SCALE MRNA] (ISOFORM 2)</scope>
    <source>
        <tissue>Amygdala</tissue>
    </source>
</reference>
<reference key="3">
    <citation type="journal article" date="2006" name="Nature">
        <title>Analysis of the DNA sequence and duplication history of human chromosome 15.</title>
        <authorList>
            <person name="Zody M.C."/>
            <person name="Garber M."/>
            <person name="Sharpe T."/>
            <person name="Young S.K."/>
            <person name="Rowen L."/>
            <person name="O'Neill K."/>
            <person name="Whittaker C.A."/>
            <person name="Kamal M."/>
            <person name="Chang J.L."/>
            <person name="Cuomo C.A."/>
            <person name="Dewar K."/>
            <person name="FitzGerald M.G."/>
            <person name="Kodira C.D."/>
            <person name="Madan A."/>
            <person name="Qin S."/>
            <person name="Yang X."/>
            <person name="Abbasi N."/>
            <person name="Abouelleil A."/>
            <person name="Arachchi H.M."/>
            <person name="Baradarani L."/>
            <person name="Birditt B."/>
            <person name="Bloom S."/>
            <person name="Bloom T."/>
            <person name="Borowsky M.L."/>
            <person name="Burke J."/>
            <person name="Butler J."/>
            <person name="Cook A."/>
            <person name="DeArellano K."/>
            <person name="DeCaprio D."/>
            <person name="Dorris L. III"/>
            <person name="Dors M."/>
            <person name="Eichler E.E."/>
            <person name="Engels R."/>
            <person name="Fahey J."/>
            <person name="Fleetwood P."/>
            <person name="Friedman C."/>
            <person name="Gearin G."/>
            <person name="Hall J.L."/>
            <person name="Hensley G."/>
            <person name="Johnson E."/>
            <person name="Jones C."/>
            <person name="Kamat A."/>
            <person name="Kaur A."/>
            <person name="Locke D.P."/>
            <person name="Madan A."/>
            <person name="Munson G."/>
            <person name="Jaffe D.B."/>
            <person name="Lui A."/>
            <person name="Macdonald P."/>
            <person name="Mauceli E."/>
            <person name="Naylor J.W."/>
            <person name="Nesbitt R."/>
            <person name="Nicol R."/>
            <person name="O'Leary S.B."/>
            <person name="Ratcliffe A."/>
            <person name="Rounsley S."/>
            <person name="She X."/>
            <person name="Sneddon K.M.B."/>
            <person name="Stewart S."/>
            <person name="Sougnez C."/>
            <person name="Stone S.M."/>
            <person name="Topham K."/>
            <person name="Vincent D."/>
            <person name="Wang S."/>
            <person name="Zimmer A.R."/>
            <person name="Birren B.W."/>
            <person name="Hood L."/>
            <person name="Lander E.S."/>
            <person name="Nusbaum C."/>
        </authorList>
    </citation>
    <scope>NUCLEOTIDE SEQUENCE [LARGE SCALE GENOMIC DNA]</scope>
</reference>
<reference key="4">
    <citation type="journal article" date="2004" name="Genome Res.">
        <title>The status, quality, and expansion of the NIH full-length cDNA project: the Mammalian Gene Collection (MGC).</title>
        <authorList>
            <consortium name="The MGC Project Team"/>
        </authorList>
    </citation>
    <scope>NUCLEOTIDE SEQUENCE [LARGE SCALE MRNA] (ISOFORM 1)</scope>
    <scope>VARIANT VAL-238</scope>
    <source>
        <tissue>Brain</tissue>
    </source>
</reference>
<reference key="5">
    <citation type="journal article" date="1999" name="DNA Res.">
        <title>Prediction of the coding sequences of unidentified human genes. XIII. The complete sequences of 100 new cDNA clones from brain which code for large proteins in vitro.</title>
        <authorList>
            <person name="Nagase T."/>
            <person name="Ishikawa K."/>
            <person name="Suyama M."/>
            <person name="Kikuno R."/>
            <person name="Hirosawa M."/>
            <person name="Miyajima N."/>
            <person name="Tanaka A."/>
            <person name="Kotani H."/>
            <person name="Nomura N."/>
            <person name="Ohara O."/>
        </authorList>
    </citation>
    <scope>NUCLEOTIDE SEQUENCE [LARGE SCALE MRNA] OF 2-480 (ISOFORM 1)</scope>
    <source>
        <tissue>Brain</tissue>
    </source>
</reference>
<reference key="6">
    <citation type="journal article" date="2006" name="Science">
        <title>The consensus coding sequences of human breast and colorectal cancers.</title>
        <authorList>
            <person name="Sjoeblom T."/>
            <person name="Jones S."/>
            <person name="Wood L.D."/>
            <person name="Parsons D.W."/>
            <person name="Lin J."/>
            <person name="Barber T.D."/>
            <person name="Mandelker D."/>
            <person name="Leary R.J."/>
            <person name="Ptak J."/>
            <person name="Silliman N."/>
            <person name="Szabo S."/>
            <person name="Buckhaults P."/>
            <person name="Farrell C."/>
            <person name="Meeh P."/>
            <person name="Markowitz S.D."/>
            <person name="Willis J."/>
            <person name="Dawson D."/>
            <person name="Willson J.K.V."/>
            <person name="Gazdar A.F."/>
            <person name="Hartigan J."/>
            <person name="Wu L."/>
            <person name="Liu C."/>
            <person name="Parmigiani G."/>
            <person name="Park B.H."/>
            <person name="Bachman K.E."/>
            <person name="Papadopoulos N."/>
            <person name="Vogelstein B."/>
            <person name="Kinzler K.W."/>
            <person name="Velculescu V.E."/>
        </authorList>
    </citation>
    <scope>VARIANT [LARGE SCALE ANALYSIS] LEU-318</scope>
</reference>
<sequence length="480" mass="54953">MTVTKMSWRPQYRSSKFRNVYGKVANREHCFDGIPITKNVHDNHFCAVNTRFLAIVTESAGGGSFLVIPLEQTGRIEPNYPKVCGHQGNVLDIKWNPFIDNIIASCSEDTSVRIWEIPEGGLKRNMTEALLELHGHSRRVGLVEWHPTTNNILFSAGYDYKVLIWNLDVGEPVKMIDCHTDVILCMSFNTDGSLLTTTCKDKKLRVIEPRSGRVLQEANCKNHRVNRVVFLGNMKRLLTTGVSRWNTRQIALWDQEDLSMPLIEEEIDGLSGLLFPFYDADTHMLYLAGKGDGNIRYYEISTEKPYLSYLMEFRSPAPQKGLGVMPKHGLDVSACEVFRFYKLVTLKGLIEPISMIVPRRSDSYQEDIYPMTPGTEPALTPDEWLGGINRDPVLMSLKEGYKKSSKMVFKAPIKEKKSVVVNGIDLLENVPPRTENELLRMFFRQQDEIRRLKEELAQKDIRIRQLQLELKNLRNSPKNC</sequence>
<keyword id="KW-0009">Actin-binding</keyword>
<keyword id="KW-0025">Alternative splicing</keyword>
<keyword id="KW-0175">Coiled coil</keyword>
<keyword id="KW-0963">Cytoplasm</keyword>
<keyword id="KW-0206">Cytoskeleton</keyword>
<keyword id="KW-1267">Proteomics identification</keyword>
<keyword id="KW-1185">Reference proteome</keyword>
<keyword id="KW-0677">Repeat</keyword>
<keyword id="KW-0853">WD repeat</keyword>
<proteinExistence type="evidence at protein level"/>
<gene>
    <name type="primary">CORO2B</name>
    <name type="synonym">KIAA0925</name>
</gene>
<evidence type="ECO:0000255" key="1"/>
<evidence type="ECO:0000269" key="2">
    <source>
    </source>
</evidence>
<evidence type="ECO:0000269" key="3">
    <source>
    </source>
</evidence>
<evidence type="ECO:0000303" key="4">
    <source>
    </source>
</evidence>
<evidence type="ECO:0000305" key="5"/>
<name>COR2B_HUMAN</name>
<dbReference type="EMBL" id="AB010098">
    <property type="protein sequence ID" value="BAA36341.1"/>
    <property type="status" value="ALT_INIT"/>
    <property type="molecule type" value="mRNA"/>
</dbReference>
<dbReference type="EMBL" id="AK289678">
    <property type="protein sequence ID" value="BAF82367.1"/>
    <property type="molecule type" value="mRNA"/>
</dbReference>
<dbReference type="EMBL" id="AC090734">
    <property type="status" value="NOT_ANNOTATED_CDS"/>
    <property type="molecule type" value="Genomic_DNA"/>
</dbReference>
<dbReference type="EMBL" id="AC105014">
    <property type="status" value="NOT_ANNOTATED_CDS"/>
    <property type="molecule type" value="Genomic_DNA"/>
</dbReference>
<dbReference type="EMBL" id="BC026335">
    <property type="protein sequence ID" value="AAH26335.1"/>
    <property type="status" value="ALT_INIT"/>
    <property type="molecule type" value="mRNA"/>
</dbReference>
<dbReference type="EMBL" id="AB023142">
    <property type="protein sequence ID" value="BAA76769.1"/>
    <property type="molecule type" value="mRNA"/>
</dbReference>
<dbReference type="CCDS" id="CCDS10229.2">
    <molecule id="Q9UQ03-1"/>
</dbReference>
<dbReference type="CCDS" id="CCDS53952.1">
    <molecule id="Q9UQ03-2"/>
</dbReference>
<dbReference type="RefSeq" id="NP_001177385.1">
    <molecule id="Q9UQ03-2"/>
    <property type="nucleotide sequence ID" value="NM_001190456.2"/>
</dbReference>
<dbReference type="RefSeq" id="NP_001177386.1">
    <molecule id="Q9UQ03-2"/>
    <property type="nucleotide sequence ID" value="NM_001190457.2"/>
</dbReference>
<dbReference type="RefSeq" id="NP_001310943.1">
    <molecule id="Q9UQ03-2"/>
    <property type="nucleotide sequence ID" value="NM_001324014.1"/>
</dbReference>
<dbReference type="RefSeq" id="NP_001310944.1">
    <molecule id="Q9UQ03-2"/>
    <property type="nucleotide sequence ID" value="NM_001324015.1"/>
</dbReference>
<dbReference type="RefSeq" id="NP_006082.3">
    <molecule id="Q9UQ03-1"/>
    <property type="nucleotide sequence ID" value="NM_006091.5"/>
</dbReference>
<dbReference type="SMR" id="Q9UQ03"/>
<dbReference type="BioGRID" id="115663">
    <property type="interactions" value="23"/>
</dbReference>
<dbReference type="FunCoup" id="Q9UQ03">
    <property type="interactions" value="102"/>
</dbReference>
<dbReference type="IntAct" id="Q9UQ03">
    <property type="interactions" value="21"/>
</dbReference>
<dbReference type="MINT" id="Q9UQ03"/>
<dbReference type="STRING" id="9606.ENSP00000261861"/>
<dbReference type="GlyGen" id="Q9UQ03">
    <property type="glycosylation" value="2 sites, 1 O-linked glycan (1 site)"/>
</dbReference>
<dbReference type="iPTMnet" id="Q9UQ03"/>
<dbReference type="PhosphoSitePlus" id="Q9UQ03"/>
<dbReference type="SwissPalm" id="Q9UQ03"/>
<dbReference type="BioMuta" id="CORO2B"/>
<dbReference type="DMDM" id="254763439"/>
<dbReference type="jPOST" id="Q9UQ03"/>
<dbReference type="MassIVE" id="Q9UQ03"/>
<dbReference type="PaxDb" id="9606-ENSP00000454783"/>
<dbReference type="PeptideAtlas" id="Q9UQ03"/>
<dbReference type="ProteomicsDB" id="85482">
    <molecule id="Q9UQ03-1"/>
</dbReference>
<dbReference type="ProteomicsDB" id="85483">
    <molecule id="Q9UQ03-2"/>
</dbReference>
<dbReference type="Pumba" id="Q9UQ03"/>
<dbReference type="Antibodypedia" id="2828">
    <property type="antibodies" value="166 antibodies from 24 providers"/>
</dbReference>
<dbReference type="DNASU" id="10391"/>
<dbReference type="Ensembl" id="ENST00000261861.10">
    <molecule id="Q9UQ03-1"/>
    <property type="protein sequence ID" value="ENSP00000261861.6"/>
    <property type="gene ID" value="ENSG00000103647.13"/>
</dbReference>
<dbReference type="Ensembl" id="ENST00000540068.6">
    <molecule id="Q9UQ03-2"/>
    <property type="protein sequence ID" value="ENSP00000446250.1"/>
    <property type="gene ID" value="ENSG00000103647.13"/>
</dbReference>
<dbReference type="Ensembl" id="ENST00000543950.3">
    <molecule id="Q9UQ03-2"/>
    <property type="protein sequence ID" value="ENSP00000443819.1"/>
    <property type="gene ID" value="ENSG00000103647.13"/>
</dbReference>
<dbReference type="GeneID" id="10391"/>
<dbReference type="KEGG" id="hsa:10391"/>
<dbReference type="MANE-Select" id="ENST00000261861.10">
    <property type="protein sequence ID" value="ENSP00000261861.6"/>
    <property type="RefSeq nucleotide sequence ID" value="NM_006091.5"/>
    <property type="RefSeq protein sequence ID" value="NP_006082.3"/>
</dbReference>
<dbReference type="UCSC" id="uc002arj.5">
    <molecule id="Q9UQ03-1"/>
    <property type="organism name" value="human"/>
</dbReference>
<dbReference type="AGR" id="HGNC:2256"/>
<dbReference type="CTD" id="10391"/>
<dbReference type="DisGeNET" id="10391"/>
<dbReference type="GeneCards" id="CORO2B"/>
<dbReference type="HGNC" id="HGNC:2256">
    <property type="gene designation" value="CORO2B"/>
</dbReference>
<dbReference type="HPA" id="ENSG00000103647">
    <property type="expression patterns" value="Tissue enhanced (brain, retina)"/>
</dbReference>
<dbReference type="MIM" id="605002">
    <property type="type" value="gene"/>
</dbReference>
<dbReference type="neXtProt" id="NX_Q9UQ03"/>
<dbReference type="OpenTargets" id="ENSG00000103647"/>
<dbReference type="PharmGKB" id="PA26772"/>
<dbReference type="VEuPathDB" id="HostDB:ENSG00000103647"/>
<dbReference type="eggNOG" id="KOG0303">
    <property type="taxonomic scope" value="Eukaryota"/>
</dbReference>
<dbReference type="GeneTree" id="ENSGT00940000158689"/>
<dbReference type="HOGENOM" id="CLU_026859_4_0_1"/>
<dbReference type="InParanoid" id="Q9UQ03"/>
<dbReference type="OMA" id="EREMAIW"/>
<dbReference type="OrthoDB" id="1850764at2759"/>
<dbReference type="PAN-GO" id="Q9UQ03">
    <property type="GO annotations" value="1 GO annotation based on evolutionary models"/>
</dbReference>
<dbReference type="PhylomeDB" id="Q9UQ03"/>
<dbReference type="TreeFam" id="TF314280"/>
<dbReference type="PathwayCommons" id="Q9UQ03"/>
<dbReference type="SignaLink" id="Q9UQ03"/>
<dbReference type="BioGRID-ORCS" id="10391">
    <property type="hits" value="8 hits in 1147 CRISPR screens"/>
</dbReference>
<dbReference type="CD-CODE" id="FB4E32DD">
    <property type="entry name" value="Presynaptic clusters and postsynaptic densities"/>
</dbReference>
<dbReference type="ChiTaRS" id="CORO2B">
    <property type="organism name" value="human"/>
</dbReference>
<dbReference type="GenomeRNAi" id="10391"/>
<dbReference type="Pharos" id="Q9UQ03">
    <property type="development level" value="Tdark"/>
</dbReference>
<dbReference type="PRO" id="PR:Q9UQ03"/>
<dbReference type="Proteomes" id="UP000005640">
    <property type="component" value="Chromosome 15"/>
</dbReference>
<dbReference type="RNAct" id="Q9UQ03">
    <property type="molecule type" value="protein"/>
</dbReference>
<dbReference type="Bgee" id="ENSG00000103647">
    <property type="expression patterns" value="Expressed in ganglionic eminence and 142 other cell types or tissues"/>
</dbReference>
<dbReference type="GO" id="GO:0015629">
    <property type="term" value="C:actin cytoskeleton"/>
    <property type="evidence" value="ECO:0000303"/>
    <property type="project" value="UniProtKB"/>
</dbReference>
<dbReference type="GO" id="GO:0005737">
    <property type="term" value="C:cytoplasm"/>
    <property type="evidence" value="ECO:0007669"/>
    <property type="project" value="UniProtKB-KW"/>
</dbReference>
<dbReference type="GO" id="GO:0005925">
    <property type="term" value="C:focal adhesion"/>
    <property type="evidence" value="ECO:0000314"/>
    <property type="project" value="MGI"/>
</dbReference>
<dbReference type="GO" id="GO:0016020">
    <property type="term" value="C:membrane"/>
    <property type="evidence" value="ECO:0000303"/>
    <property type="project" value="UniProtKB"/>
</dbReference>
<dbReference type="GO" id="GO:0003779">
    <property type="term" value="F:actin binding"/>
    <property type="evidence" value="ECO:0000303"/>
    <property type="project" value="UniProtKB"/>
</dbReference>
<dbReference type="GO" id="GO:0051015">
    <property type="term" value="F:actin filament binding"/>
    <property type="evidence" value="ECO:0000318"/>
    <property type="project" value="GO_Central"/>
</dbReference>
<dbReference type="GO" id="GO:1990147">
    <property type="term" value="F:talin binding"/>
    <property type="evidence" value="ECO:0000314"/>
    <property type="project" value="MGI"/>
</dbReference>
<dbReference type="GO" id="GO:0017166">
    <property type="term" value="F:vinculin binding"/>
    <property type="evidence" value="ECO:0000353"/>
    <property type="project" value="MGI"/>
</dbReference>
<dbReference type="GO" id="GO:0030036">
    <property type="term" value="P:actin cytoskeleton organization"/>
    <property type="evidence" value="ECO:0000303"/>
    <property type="project" value="UniProtKB"/>
</dbReference>
<dbReference type="GO" id="GO:0048041">
    <property type="term" value="P:focal adhesion assembly"/>
    <property type="evidence" value="ECO:0007669"/>
    <property type="project" value="Ensembl"/>
</dbReference>
<dbReference type="GO" id="GO:0010812">
    <property type="term" value="P:negative regulation of cell-substrate adhesion"/>
    <property type="evidence" value="ECO:0000314"/>
    <property type="project" value="MGI"/>
</dbReference>
<dbReference type="GO" id="GO:1904950">
    <property type="term" value="P:negative regulation of establishment of protein localization"/>
    <property type="evidence" value="ECO:0000314"/>
    <property type="project" value="MGI"/>
</dbReference>
<dbReference type="GO" id="GO:0051497">
    <property type="term" value="P:negative regulation of stress fiber assembly"/>
    <property type="evidence" value="ECO:0007669"/>
    <property type="project" value="Ensembl"/>
</dbReference>
<dbReference type="GO" id="GO:1904951">
    <property type="term" value="P:positive regulation of establishment of protein localization"/>
    <property type="evidence" value="ECO:0000314"/>
    <property type="project" value="MGI"/>
</dbReference>
<dbReference type="GO" id="GO:0032956">
    <property type="term" value="P:regulation of actin cytoskeleton organization"/>
    <property type="evidence" value="ECO:0000314"/>
    <property type="project" value="MGI"/>
</dbReference>
<dbReference type="GO" id="GO:0080135">
    <property type="term" value="P:regulation of cellular response to stress"/>
    <property type="evidence" value="ECO:0000314"/>
    <property type="project" value="MGI"/>
</dbReference>
<dbReference type="GO" id="GO:0003093">
    <property type="term" value="P:regulation of glomerular filtration"/>
    <property type="evidence" value="ECO:0007669"/>
    <property type="project" value="Ensembl"/>
</dbReference>
<dbReference type="FunFam" id="2.130.10.10:FF:000053">
    <property type="entry name" value="Coronin"/>
    <property type="match status" value="1"/>
</dbReference>
<dbReference type="Gene3D" id="2.130.10.10">
    <property type="entry name" value="YVTN repeat-like/Quinoprotein amine dehydrogenase"/>
    <property type="match status" value="1"/>
</dbReference>
<dbReference type="InterPro" id="IPR015505">
    <property type="entry name" value="Coronin"/>
</dbReference>
<dbReference type="InterPro" id="IPR015048">
    <property type="entry name" value="DUF1899"/>
</dbReference>
<dbReference type="InterPro" id="IPR015943">
    <property type="entry name" value="WD40/YVTN_repeat-like_dom_sf"/>
</dbReference>
<dbReference type="InterPro" id="IPR019775">
    <property type="entry name" value="WD40_repeat_CS"/>
</dbReference>
<dbReference type="InterPro" id="IPR036322">
    <property type="entry name" value="WD40_repeat_dom_sf"/>
</dbReference>
<dbReference type="InterPro" id="IPR001680">
    <property type="entry name" value="WD40_rpt"/>
</dbReference>
<dbReference type="PANTHER" id="PTHR10856">
    <property type="entry name" value="CORONIN"/>
    <property type="match status" value="1"/>
</dbReference>
<dbReference type="PANTHER" id="PTHR10856:SF17">
    <property type="entry name" value="CORONIN-2B"/>
    <property type="match status" value="1"/>
</dbReference>
<dbReference type="Pfam" id="PF08953">
    <property type="entry name" value="DUF1899"/>
    <property type="match status" value="1"/>
</dbReference>
<dbReference type="Pfam" id="PF00400">
    <property type="entry name" value="WD40"/>
    <property type="match status" value="3"/>
</dbReference>
<dbReference type="Pfam" id="PF16300">
    <property type="entry name" value="WD40_4"/>
    <property type="match status" value="1"/>
</dbReference>
<dbReference type="SMART" id="SM01166">
    <property type="entry name" value="DUF1899"/>
    <property type="match status" value="1"/>
</dbReference>
<dbReference type="SMART" id="SM01167">
    <property type="entry name" value="DUF1900"/>
    <property type="match status" value="1"/>
</dbReference>
<dbReference type="SMART" id="SM00320">
    <property type="entry name" value="WD40"/>
    <property type="match status" value="4"/>
</dbReference>
<dbReference type="SUPFAM" id="SSF50978">
    <property type="entry name" value="WD40 repeat-like"/>
    <property type="match status" value="1"/>
</dbReference>
<dbReference type="PROSITE" id="PS00678">
    <property type="entry name" value="WD_REPEATS_1"/>
    <property type="match status" value="2"/>
</dbReference>
<dbReference type="PROSITE" id="PS50082">
    <property type="entry name" value="WD_REPEATS_2"/>
    <property type="match status" value="3"/>
</dbReference>
<dbReference type="PROSITE" id="PS50294">
    <property type="entry name" value="WD_REPEATS_REGION"/>
    <property type="match status" value="1"/>
</dbReference>
<accession>Q9UQ03</accession>
<accession>A8K0W3</accession>
<accession>O94767</accession>
<accession>Q8TAN1</accession>